<proteinExistence type="inferred from homology"/>
<accession>Q2GBV3</accession>
<name>RL28_NOVAD</name>
<dbReference type="EMBL" id="CP000248">
    <property type="protein sequence ID" value="ABD24670.1"/>
    <property type="molecule type" value="Genomic_DNA"/>
</dbReference>
<dbReference type="RefSeq" id="WP_011443884.1">
    <property type="nucleotide sequence ID" value="NC_007794.1"/>
</dbReference>
<dbReference type="SMR" id="Q2GBV3"/>
<dbReference type="STRING" id="279238.Saro_0222"/>
<dbReference type="KEGG" id="nar:Saro_0222"/>
<dbReference type="eggNOG" id="COG0227">
    <property type="taxonomic scope" value="Bacteria"/>
</dbReference>
<dbReference type="HOGENOM" id="CLU_064548_4_2_5"/>
<dbReference type="Proteomes" id="UP000009134">
    <property type="component" value="Chromosome"/>
</dbReference>
<dbReference type="GO" id="GO:0022625">
    <property type="term" value="C:cytosolic large ribosomal subunit"/>
    <property type="evidence" value="ECO:0007669"/>
    <property type="project" value="TreeGrafter"/>
</dbReference>
<dbReference type="GO" id="GO:0003735">
    <property type="term" value="F:structural constituent of ribosome"/>
    <property type="evidence" value="ECO:0007669"/>
    <property type="project" value="InterPro"/>
</dbReference>
<dbReference type="GO" id="GO:0006412">
    <property type="term" value="P:translation"/>
    <property type="evidence" value="ECO:0007669"/>
    <property type="project" value="UniProtKB-UniRule"/>
</dbReference>
<dbReference type="Gene3D" id="2.30.170.40">
    <property type="entry name" value="Ribosomal protein L28/L24"/>
    <property type="match status" value="1"/>
</dbReference>
<dbReference type="HAMAP" id="MF_00373">
    <property type="entry name" value="Ribosomal_bL28"/>
    <property type="match status" value="1"/>
</dbReference>
<dbReference type="InterPro" id="IPR026569">
    <property type="entry name" value="Ribosomal_bL28"/>
</dbReference>
<dbReference type="InterPro" id="IPR034704">
    <property type="entry name" value="Ribosomal_bL28/bL31-like_sf"/>
</dbReference>
<dbReference type="InterPro" id="IPR001383">
    <property type="entry name" value="Ribosomal_bL28_bact-type"/>
</dbReference>
<dbReference type="InterPro" id="IPR037147">
    <property type="entry name" value="Ribosomal_bL28_sf"/>
</dbReference>
<dbReference type="NCBIfam" id="TIGR00009">
    <property type="entry name" value="L28"/>
    <property type="match status" value="1"/>
</dbReference>
<dbReference type="PANTHER" id="PTHR13528">
    <property type="entry name" value="39S RIBOSOMAL PROTEIN L28, MITOCHONDRIAL"/>
    <property type="match status" value="1"/>
</dbReference>
<dbReference type="PANTHER" id="PTHR13528:SF2">
    <property type="entry name" value="LARGE RIBOSOMAL SUBUNIT PROTEIN BL28M"/>
    <property type="match status" value="1"/>
</dbReference>
<dbReference type="Pfam" id="PF00830">
    <property type="entry name" value="Ribosomal_L28"/>
    <property type="match status" value="1"/>
</dbReference>
<dbReference type="SUPFAM" id="SSF143800">
    <property type="entry name" value="L28p-like"/>
    <property type="match status" value="1"/>
</dbReference>
<reference key="1">
    <citation type="submission" date="2006-01" db="EMBL/GenBank/DDBJ databases">
        <title>Complete sequence of Novosphingobium aromaticivorans DSM 12444.</title>
        <authorList>
            <consortium name="US DOE Joint Genome Institute"/>
            <person name="Copeland A."/>
            <person name="Lucas S."/>
            <person name="Lapidus A."/>
            <person name="Barry K."/>
            <person name="Detter J.C."/>
            <person name="Glavina T."/>
            <person name="Hammon N."/>
            <person name="Israni S."/>
            <person name="Pitluck S."/>
            <person name="Chain P."/>
            <person name="Malfatti S."/>
            <person name="Shin M."/>
            <person name="Vergez L."/>
            <person name="Schmutz J."/>
            <person name="Larimer F."/>
            <person name="Land M."/>
            <person name="Kyrpides N."/>
            <person name="Ivanova N."/>
            <person name="Fredrickson J."/>
            <person name="Balkwill D."/>
            <person name="Romine M.F."/>
            <person name="Richardson P."/>
        </authorList>
    </citation>
    <scope>NUCLEOTIDE SEQUENCE [LARGE SCALE GENOMIC DNA]</scope>
    <source>
        <strain>ATCC 700278 / DSM 12444 / CCUG 56034 / CIP 105152 / NBRC 16084 / F199</strain>
    </source>
</reference>
<gene>
    <name evidence="1" type="primary">rpmB</name>
    <name type="ordered locus">Saro_0222</name>
</gene>
<feature type="chain" id="PRO_1000007291" description="Large ribosomal subunit protein bL28">
    <location>
        <begin position="1"/>
        <end position="94"/>
    </location>
</feature>
<keyword id="KW-1185">Reference proteome</keyword>
<keyword id="KW-0687">Ribonucleoprotein</keyword>
<keyword id="KW-0689">Ribosomal protein</keyword>
<evidence type="ECO:0000255" key="1">
    <source>
        <dbReference type="HAMAP-Rule" id="MF_00373"/>
    </source>
</evidence>
<evidence type="ECO:0000305" key="2"/>
<sequence>MSRICELTGKGRQVGHNVSHANNKTKRLFLPNLQNVTLLSEKLDRSFKFRVSTHGLRSVEHNGGLDNWLLKQSDTKLSARALKVKRELVKASAA</sequence>
<protein>
    <recommendedName>
        <fullName evidence="1">Large ribosomal subunit protein bL28</fullName>
    </recommendedName>
    <alternativeName>
        <fullName evidence="2">50S ribosomal protein L28</fullName>
    </alternativeName>
</protein>
<comment type="similarity">
    <text evidence="1">Belongs to the bacterial ribosomal protein bL28 family.</text>
</comment>
<organism>
    <name type="scientific">Novosphingobium aromaticivorans (strain ATCC 700278 / DSM 12444 / CCUG 56034 / CIP 105152 / NBRC 16084 / F199)</name>
    <dbReference type="NCBI Taxonomy" id="279238"/>
    <lineage>
        <taxon>Bacteria</taxon>
        <taxon>Pseudomonadati</taxon>
        <taxon>Pseudomonadota</taxon>
        <taxon>Alphaproteobacteria</taxon>
        <taxon>Sphingomonadales</taxon>
        <taxon>Sphingomonadaceae</taxon>
        <taxon>Novosphingobium</taxon>
    </lineage>
</organism>